<sequence>MAPEDHEGATSLLQSFERRFLAARALPSFPWQSLEEKLKDPSGSELLLAILQRTVKHPVCVQHGPSVKYARCFLSKLIKKHEAVPTEPLDALYEALAEVLMTQESTQCHRSYLLPSGNSVTLSESTAIVSHGTTGLVTWDAALYLAEWAIENPAAFTDRTILELGSGAGLTGLAICKACCPRAYIFSDCHAQVLEQLRGNVLLNGFSLEPHTPIDAGSSKVTVAQLDWDEVTASQLSAFQADVVIAADVLYCWEMTLSLVRVLKMLEDCQRKSAPDVYVAYTIRSQDTGKLFIEELDRAGIYWEEVPPHTGKLFPYEEHSAIVILKLVLTSRHGV</sequence>
<dbReference type="EC" id="2.1.1.-" evidence="1"/>
<dbReference type="EMBL" id="AK017533">
    <property type="protein sequence ID" value="BAB30795.3"/>
    <property type="molecule type" value="mRNA"/>
</dbReference>
<dbReference type="EMBL" id="AK133590">
    <property type="protein sequence ID" value="BAE21738.1"/>
    <property type="molecule type" value="mRNA"/>
</dbReference>
<dbReference type="EMBL" id="AK163493">
    <property type="protein sequence ID" value="BAE37370.1"/>
    <property type="molecule type" value="mRNA"/>
</dbReference>
<dbReference type="EMBL" id="AC124576">
    <property type="status" value="NOT_ANNOTATED_CDS"/>
    <property type="molecule type" value="Genomic_DNA"/>
</dbReference>
<dbReference type="EMBL" id="BC051078">
    <property type="protein sequence ID" value="AAH51078.1"/>
    <property type="molecule type" value="mRNA"/>
</dbReference>
<dbReference type="CCDS" id="CCDS27935.1">
    <molecule id="Q3UZW7-1"/>
</dbReference>
<dbReference type="RefSeq" id="NP_081722.1">
    <molecule id="Q3UZW7-1"/>
    <property type="nucleotide sequence ID" value="NM_027446.2"/>
</dbReference>
<dbReference type="SMR" id="Q3UZW7"/>
<dbReference type="FunCoup" id="Q3UZW7">
    <property type="interactions" value="510"/>
</dbReference>
<dbReference type="STRING" id="10090.ENSMUSP00000068003"/>
<dbReference type="PhosphoSitePlus" id="Q3UZW7"/>
<dbReference type="PaxDb" id="10090-ENSMUSP00000068003"/>
<dbReference type="ProteomicsDB" id="277687">
    <molecule id="Q3UZW7-1"/>
</dbReference>
<dbReference type="ProteomicsDB" id="277688">
    <molecule id="Q3UZW7-2"/>
</dbReference>
<dbReference type="ProteomicsDB" id="277689">
    <molecule id="Q3UZW7-3"/>
</dbReference>
<dbReference type="Pumba" id="Q3UZW7"/>
<dbReference type="DNASU" id="70511"/>
<dbReference type="Ensembl" id="ENSMUST00000064635.12">
    <molecule id="Q3UZW7-1"/>
    <property type="protein sequence ID" value="ENSMUSP00000068003.6"/>
    <property type="gene ID" value="ENSMUSG00000022544.15"/>
</dbReference>
<dbReference type="GeneID" id="70511"/>
<dbReference type="KEGG" id="mmu:70511"/>
<dbReference type="UCSC" id="uc007ybz.1">
    <molecule id="Q3UZW7-1"/>
    <property type="organism name" value="mouse"/>
</dbReference>
<dbReference type="UCSC" id="uc007yca.1">
    <molecule id="Q3UZW7-3"/>
    <property type="organism name" value="mouse"/>
</dbReference>
<dbReference type="AGR" id="MGI:1917761"/>
<dbReference type="CTD" id="196483"/>
<dbReference type="MGI" id="MGI:1917761">
    <property type="gene designation" value="Eef2kmt"/>
</dbReference>
<dbReference type="VEuPathDB" id="HostDB:ENSMUSG00000022544"/>
<dbReference type="eggNOG" id="KOG2497">
    <property type="taxonomic scope" value="Eukaryota"/>
</dbReference>
<dbReference type="GeneTree" id="ENSGT00510000047003"/>
<dbReference type="HOGENOM" id="CLU_038942_0_0_1"/>
<dbReference type="InParanoid" id="Q3UZW7"/>
<dbReference type="OMA" id="PIRTYRI"/>
<dbReference type="OrthoDB" id="194386at2759"/>
<dbReference type="PhylomeDB" id="Q3UZW7"/>
<dbReference type="TreeFam" id="TF326304"/>
<dbReference type="Reactome" id="R-MMU-8876725">
    <property type="pathway name" value="Protein methylation"/>
</dbReference>
<dbReference type="BioGRID-ORCS" id="70511">
    <property type="hits" value="3 hits in 76 CRISPR screens"/>
</dbReference>
<dbReference type="ChiTaRS" id="Eef2kmt">
    <property type="organism name" value="mouse"/>
</dbReference>
<dbReference type="PRO" id="PR:Q3UZW7"/>
<dbReference type="Proteomes" id="UP000000589">
    <property type="component" value="Chromosome 16"/>
</dbReference>
<dbReference type="RNAct" id="Q3UZW7">
    <property type="molecule type" value="protein"/>
</dbReference>
<dbReference type="Bgee" id="ENSMUSG00000022544">
    <property type="expression patterns" value="Expressed in humerus cartilage element and 100 other cell types or tissues"/>
</dbReference>
<dbReference type="ExpressionAtlas" id="Q3UZW7">
    <property type="expression patterns" value="baseline and differential"/>
</dbReference>
<dbReference type="GO" id="GO:0005737">
    <property type="term" value="C:cytoplasm"/>
    <property type="evidence" value="ECO:0007669"/>
    <property type="project" value="UniProtKB-SubCell"/>
</dbReference>
<dbReference type="GO" id="GO:0016279">
    <property type="term" value="F:protein-lysine N-methyltransferase activity"/>
    <property type="evidence" value="ECO:0000250"/>
    <property type="project" value="UniProtKB"/>
</dbReference>
<dbReference type="GO" id="GO:0018023">
    <property type="term" value="P:peptidyl-lysine trimethylation"/>
    <property type="evidence" value="ECO:0000250"/>
    <property type="project" value="UniProtKB"/>
</dbReference>
<dbReference type="FunFam" id="3.40.50.150:FF:000242">
    <property type="entry name" value="Protein-lysine N-methyltransferase EEF2KMT"/>
    <property type="match status" value="1"/>
</dbReference>
<dbReference type="Gene3D" id="3.40.50.150">
    <property type="entry name" value="Vaccinia Virus protein VP39"/>
    <property type="match status" value="1"/>
</dbReference>
<dbReference type="InterPro" id="IPR029426">
    <property type="entry name" value="FAM86_N"/>
</dbReference>
<dbReference type="InterPro" id="IPR019410">
    <property type="entry name" value="Methyltransf_16"/>
</dbReference>
<dbReference type="InterPro" id="IPR029063">
    <property type="entry name" value="SAM-dependent_MTases_sf"/>
</dbReference>
<dbReference type="PANTHER" id="PTHR14614">
    <property type="entry name" value="HEPATOCELLULAR CARCINOMA-ASSOCIATED ANTIGEN"/>
    <property type="match status" value="1"/>
</dbReference>
<dbReference type="PANTHER" id="PTHR14614:SF130">
    <property type="entry name" value="PROTEIN-LYSINE N-METHYLTRANSFERASE EEF2KMT"/>
    <property type="match status" value="1"/>
</dbReference>
<dbReference type="Pfam" id="PF14904">
    <property type="entry name" value="FAM86"/>
    <property type="match status" value="1"/>
</dbReference>
<dbReference type="Pfam" id="PF10294">
    <property type="entry name" value="Methyltransf_16"/>
    <property type="match status" value="1"/>
</dbReference>
<dbReference type="SUPFAM" id="SSF53335">
    <property type="entry name" value="S-adenosyl-L-methionine-dependent methyltransferases"/>
    <property type="match status" value="1"/>
</dbReference>
<comment type="function">
    <text evidence="1">Catalyzes the trimethylation of eukaryotic elongation factor 2 (EEF2) on 'Lys-525'.</text>
</comment>
<comment type="catalytic activity">
    <reaction evidence="1">
        <text>L-lysyl-[protein] + 3 S-adenosyl-L-methionine = N(6),N(6),N(6)-trimethyl-L-lysyl-[protein] + 3 S-adenosyl-L-homocysteine + 3 H(+)</text>
        <dbReference type="Rhea" id="RHEA:54192"/>
        <dbReference type="Rhea" id="RHEA-COMP:9752"/>
        <dbReference type="Rhea" id="RHEA-COMP:13826"/>
        <dbReference type="ChEBI" id="CHEBI:15378"/>
        <dbReference type="ChEBI" id="CHEBI:29969"/>
        <dbReference type="ChEBI" id="CHEBI:57856"/>
        <dbReference type="ChEBI" id="CHEBI:59789"/>
        <dbReference type="ChEBI" id="CHEBI:61961"/>
    </reaction>
    <physiologicalReaction direction="left-to-right" evidence="1">
        <dbReference type="Rhea" id="RHEA:54193"/>
    </physiologicalReaction>
</comment>
<comment type="subunit">
    <text evidence="1">Interacts with FAM86B2 and FAM86C1P.</text>
</comment>
<comment type="subcellular location">
    <subcellularLocation>
        <location evidence="1">Cytoplasm</location>
    </subcellularLocation>
</comment>
<comment type="alternative products">
    <event type="alternative splicing"/>
    <isoform>
        <id>Q3UZW7-1</id>
        <name>1</name>
        <sequence type="displayed"/>
    </isoform>
    <isoform>
        <id>Q3UZW7-2</id>
        <name>2</name>
        <sequence type="described" ref="VSP_033329"/>
    </isoform>
    <isoform>
        <id>Q3UZW7-3</id>
        <name>3</name>
        <sequence type="described" ref="VSP_033330"/>
    </isoform>
</comment>
<comment type="similarity">
    <text evidence="5">Belongs to the class I-like SAM-binding methyltransferase superfamily. EEF2KMT family.</text>
</comment>
<proteinExistence type="evidence at protein level"/>
<feature type="chain" id="PRO_0000076219" description="Protein-lysine N-methyltransferase EEF2KMT">
    <location>
        <begin position="1"/>
        <end position="335"/>
    </location>
</feature>
<feature type="binding site" evidence="2">
    <location>
        <position position="139"/>
    </location>
    <ligand>
        <name>S-adenosyl-L-methionine</name>
        <dbReference type="ChEBI" id="CHEBI:59789"/>
    </ligand>
</feature>
<feature type="binding site" evidence="2">
    <location>
        <begin position="165"/>
        <end position="167"/>
    </location>
    <ligand>
        <name>S-adenosyl-L-methionine</name>
        <dbReference type="ChEBI" id="CHEBI:59789"/>
    </ligand>
</feature>
<feature type="binding site" evidence="2">
    <location>
        <position position="228"/>
    </location>
    <ligand>
        <name>S-adenosyl-L-methionine</name>
        <dbReference type="ChEBI" id="CHEBI:59789"/>
    </ligand>
</feature>
<feature type="binding site" evidence="2">
    <location>
        <position position="247"/>
    </location>
    <ligand>
        <name>S-adenosyl-L-methionine</name>
        <dbReference type="ChEBI" id="CHEBI:59789"/>
    </ligand>
</feature>
<feature type="modified residue" description="N-acetylmethionine" evidence="1">
    <location>
        <position position="1"/>
    </location>
</feature>
<feature type="splice variant" id="VSP_033329" description="In isoform 2." evidence="3">
    <location>
        <begin position="1"/>
        <end position="100"/>
    </location>
</feature>
<feature type="splice variant" id="VSP_033330" description="In isoform 3." evidence="4">
    <original>DRAGIYWEEVPPHTGKLFPYEEHSAIVILKLVLTSRHGV</original>
    <variation>GQFPTCGPPFCHEEGLKTGLTLR</variation>
    <location>
        <begin position="297"/>
        <end position="335"/>
    </location>
</feature>
<feature type="sequence conflict" description="In Ref. 1; BAE37370." evidence="5" ref="1">
    <original>P</original>
    <variation>R</variation>
    <location>
        <position position="3"/>
    </location>
</feature>
<evidence type="ECO:0000250" key="1">
    <source>
        <dbReference type="UniProtKB" id="Q96G04"/>
    </source>
</evidence>
<evidence type="ECO:0000250" key="2">
    <source>
        <dbReference type="UniProtKB" id="Q9H867"/>
    </source>
</evidence>
<evidence type="ECO:0000303" key="3">
    <source>
    </source>
</evidence>
<evidence type="ECO:0000303" key="4">
    <source>
    </source>
</evidence>
<evidence type="ECO:0000305" key="5"/>
<protein>
    <recommendedName>
        <fullName evidence="5">Protein-lysine N-methyltransferase EEF2KMT</fullName>
        <ecNumber evidence="1">2.1.1.-</ecNumber>
    </recommendedName>
    <alternativeName>
        <fullName>eEF2-lysine methyltransferase</fullName>
        <shortName>eEF2-KMT</shortName>
    </alternativeName>
</protein>
<keyword id="KW-0007">Acetylation</keyword>
<keyword id="KW-0025">Alternative splicing</keyword>
<keyword id="KW-0963">Cytoplasm</keyword>
<keyword id="KW-0489">Methyltransferase</keyword>
<keyword id="KW-1185">Reference proteome</keyword>
<keyword id="KW-0949">S-adenosyl-L-methionine</keyword>
<keyword id="KW-0808">Transferase</keyword>
<organism>
    <name type="scientific">Mus musculus</name>
    <name type="common">Mouse</name>
    <dbReference type="NCBI Taxonomy" id="10090"/>
    <lineage>
        <taxon>Eukaryota</taxon>
        <taxon>Metazoa</taxon>
        <taxon>Chordata</taxon>
        <taxon>Craniata</taxon>
        <taxon>Vertebrata</taxon>
        <taxon>Euteleostomi</taxon>
        <taxon>Mammalia</taxon>
        <taxon>Eutheria</taxon>
        <taxon>Euarchontoglires</taxon>
        <taxon>Glires</taxon>
        <taxon>Rodentia</taxon>
        <taxon>Myomorpha</taxon>
        <taxon>Muroidea</taxon>
        <taxon>Muridae</taxon>
        <taxon>Murinae</taxon>
        <taxon>Mus</taxon>
        <taxon>Mus</taxon>
    </lineage>
</organism>
<gene>
    <name type="primary">Eef2kmt</name>
    <name type="synonym">Fam86</name>
    <name type="synonym">Fam86a</name>
</gene>
<name>EF2KT_MOUSE</name>
<reference key="1">
    <citation type="journal article" date="2005" name="Science">
        <title>The transcriptional landscape of the mammalian genome.</title>
        <authorList>
            <person name="Carninci P."/>
            <person name="Kasukawa T."/>
            <person name="Katayama S."/>
            <person name="Gough J."/>
            <person name="Frith M.C."/>
            <person name="Maeda N."/>
            <person name="Oyama R."/>
            <person name="Ravasi T."/>
            <person name="Lenhard B."/>
            <person name="Wells C."/>
            <person name="Kodzius R."/>
            <person name="Shimokawa K."/>
            <person name="Bajic V.B."/>
            <person name="Brenner S.E."/>
            <person name="Batalov S."/>
            <person name="Forrest A.R."/>
            <person name="Zavolan M."/>
            <person name="Davis M.J."/>
            <person name="Wilming L.G."/>
            <person name="Aidinis V."/>
            <person name="Allen J.E."/>
            <person name="Ambesi-Impiombato A."/>
            <person name="Apweiler R."/>
            <person name="Aturaliya R.N."/>
            <person name="Bailey T.L."/>
            <person name="Bansal M."/>
            <person name="Baxter L."/>
            <person name="Beisel K.W."/>
            <person name="Bersano T."/>
            <person name="Bono H."/>
            <person name="Chalk A.M."/>
            <person name="Chiu K.P."/>
            <person name="Choudhary V."/>
            <person name="Christoffels A."/>
            <person name="Clutterbuck D.R."/>
            <person name="Crowe M.L."/>
            <person name="Dalla E."/>
            <person name="Dalrymple B.P."/>
            <person name="de Bono B."/>
            <person name="Della Gatta G."/>
            <person name="di Bernardo D."/>
            <person name="Down T."/>
            <person name="Engstrom P."/>
            <person name="Fagiolini M."/>
            <person name="Faulkner G."/>
            <person name="Fletcher C.F."/>
            <person name="Fukushima T."/>
            <person name="Furuno M."/>
            <person name="Futaki S."/>
            <person name="Gariboldi M."/>
            <person name="Georgii-Hemming P."/>
            <person name="Gingeras T.R."/>
            <person name="Gojobori T."/>
            <person name="Green R.E."/>
            <person name="Gustincich S."/>
            <person name="Harbers M."/>
            <person name="Hayashi Y."/>
            <person name="Hensch T.K."/>
            <person name="Hirokawa N."/>
            <person name="Hill D."/>
            <person name="Huminiecki L."/>
            <person name="Iacono M."/>
            <person name="Ikeo K."/>
            <person name="Iwama A."/>
            <person name="Ishikawa T."/>
            <person name="Jakt M."/>
            <person name="Kanapin A."/>
            <person name="Katoh M."/>
            <person name="Kawasawa Y."/>
            <person name="Kelso J."/>
            <person name="Kitamura H."/>
            <person name="Kitano H."/>
            <person name="Kollias G."/>
            <person name="Krishnan S.P."/>
            <person name="Kruger A."/>
            <person name="Kummerfeld S.K."/>
            <person name="Kurochkin I.V."/>
            <person name="Lareau L.F."/>
            <person name="Lazarevic D."/>
            <person name="Lipovich L."/>
            <person name="Liu J."/>
            <person name="Liuni S."/>
            <person name="McWilliam S."/>
            <person name="Madan Babu M."/>
            <person name="Madera M."/>
            <person name="Marchionni L."/>
            <person name="Matsuda H."/>
            <person name="Matsuzawa S."/>
            <person name="Miki H."/>
            <person name="Mignone F."/>
            <person name="Miyake S."/>
            <person name="Morris K."/>
            <person name="Mottagui-Tabar S."/>
            <person name="Mulder N."/>
            <person name="Nakano N."/>
            <person name="Nakauchi H."/>
            <person name="Ng P."/>
            <person name="Nilsson R."/>
            <person name="Nishiguchi S."/>
            <person name="Nishikawa S."/>
            <person name="Nori F."/>
            <person name="Ohara O."/>
            <person name="Okazaki Y."/>
            <person name="Orlando V."/>
            <person name="Pang K.C."/>
            <person name="Pavan W.J."/>
            <person name="Pavesi G."/>
            <person name="Pesole G."/>
            <person name="Petrovsky N."/>
            <person name="Piazza S."/>
            <person name="Reed J."/>
            <person name="Reid J.F."/>
            <person name="Ring B.Z."/>
            <person name="Ringwald M."/>
            <person name="Rost B."/>
            <person name="Ruan Y."/>
            <person name="Salzberg S.L."/>
            <person name="Sandelin A."/>
            <person name="Schneider C."/>
            <person name="Schoenbach C."/>
            <person name="Sekiguchi K."/>
            <person name="Semple C.A."/>
            <person name="Seno S."/>
            <person name="Sessa L."/>
            <person name="Sheng Y."/>
            <person name="Shibata Y."/>
            <person name="Shimada H."/>
            <person name="Shimada K."/>
            <person name="Silva D."/>
            <person name="Sinclair B."/>
            <person name="Sperling S."/>
            <person name="Stupka E."/>
            <person name="Sugiura K."/>
            <person name="Sultana R."/>
            <person name="Takenaka Y."/>
            <person name="Taki K."/>
            <person name="Tammoja K."/>
            <person name="Tan S.L."/>
            <person name="Tang S."/>
            <person name="Taylor M.S."/>
            <person name="Tegner J."/>
            <person name="Teichmann S.A."/>
            <person name="Ueda H.R."/>
            <person name="van Nimwegen E."/>
            <person name="Verardo R."/>
            <person name="Wei C.L."/>
            <person name="Yagi K."/>
            <person name="Yamanishi H."/>
            <person name="Zabarovsky E."/>
            <person name="Zhu S."/>
            <person name="Zimmer A."/>
            <person name="Hide W."/>
            <person name="Bult C."/>
            <person name="Grimmond S.M."/>
            <person name="Teasdale R.D."/>
            <person name="Liu E.T."/>
            <person name="Brusic V."/>
            <person name="Quackenbush J."/>
            <person name="Wahlestedt C."/>
            <person name="Mattick J.S."/>
            <person name="Hume D.A."/>
            <person name="Kai C."/>
            <person name="Sasaki D."/>
            <person name="Tomaru Y."/>
            <person name="Fukuda S."/>
            <person name="Kanamori-Katayama M."/>
            <person name="Suzuki M."/>
            <person name="Aoki J."/>
            <person name="Arakawa T."/>
            <person name="Iida J."/>
            <person name="Imamura K."/>
            <person name="Itoh M."/>
            <person name="Kato T."/>
            <person name="Kawaji H."/>
            <person name="Kawagashira N."/>
            <person name="Kawashima T."/>
            <person name="Kojima M."/>
            <person name="Kondo S."/>
            <person name="Konno H."/>
            <person name="Nakano K."/>
            <person name="Ninomiya N."/>
            <person name="Nishio T."/>
            <person name="Okada M."/>
            <person name="Plessy C."/>
            <person name="Shibata K."/>
            <person name="Shiraki T."/>
            <person name="Suzuki S."/>
            <person name="Tagami M."/>
            <person name="Waki K."/>
            <person name="Watahiki A."/>
            <person name="Okamura-Oho Y."/>
            <person name="Suzuki H."/>
            <person name="Kawai J."/>
            <person name="Hayashizaki Y."/>
        </authorList>
    </citation>
    <scope>NUCLEOTIDE SEQUENCE [LARGE SCALE MRNA] (ISOFORMS 1 AND 3)</scope>
    <source>
        <strain>C57BL/6J</strain>
        <tissue>Corpora quadrigemina</tissue>
        <tissue>Pituitary</tissue>
    </source>
</reference>
<reference key="2">
    <citation type="journal article" date="2009" name="PLoS Biol.">
        <title>Lineage-specific biology revealed by a finished genome assembly of the mouse.</title>
        <authorList>
            <person name="Church D.M."/>
            <person name="Goodstadt L."/>
            <person name="Hillier L.W."/>
            <person name="Zody M.C."/>
            <person name="Goldstein S."/>
            <person name="She X."/>
            <person name="Bult C.J."/>
            <person name="Agarwala R."/>
            <person name="Cherry J.L."/>
            <person name="DiCuccio M."/>
            <person name="Hlavina W."/>
            <person name="Kapustin Y."/>
            <person name="Meric P."/>
            <person name="Maglott D."/>
            <person name="Birtle Z."/>
            <person name="Marques A.C."/>
            <person name="Graves T."/>
            <person name="Zhou S."/>
            <person name="Teague B."/>
            <person name="Potamousis K."/>
            <person name="Churas C."/>
            <person name="Place M."/>
            <person name="Herschleb J."/>
            <person name="Runnheim R."/>
            <person name="Forrest D."/>
            <person name="Amos-Landgraf J."/>
            <person name="Schwartz D.C."/>
            <person name="Cheng Z."/>
            <person name="Lindblad-Toh K."/>
            <person name="Eichler E.E."/>
            <person name="Ponting C.P."/>
        </authorList>
    </citation>
    <scope>NUCLEOTIDE SEQUENCE [LARGE SCALE GENOMIC DNA]</scope>
    <source>
        <strain>C57BL/6J</strain>
    </source>
</reference>
<reference key="3">
    <citation type="journal article" date="2004" name="Genome Res.">
        <title>The status, quality, and expansion of the NIH full-length cDNA project: the Mammalian Gene Collection (MGC).</title>
        <authorList>
            <consortium name="The MGC Project Team"/>
        </authorList>
    </citation>
    <scope>NUCLEOTIDE SEQUENCE [LARGE SCALE MRNA] (ISOFORM 2)</scope>
    <source>
        <tissue>Olfactory epithelium</tissue>
    </source>
</reference>
<reference key="4">
    <citation type="journal article" date="2010" name="Cell">
        <title>A tissue-specific atlas of mouse protein phosphorylation and expression.</title>
        <authorList>
            <person name="Huttlin E.L."/>
            <person name="Jedrychowski M.P."/>
            <person name="Elias J.E."/>
            <person name="Goswami T."/>
            <person name="Rad R."/>
            <person name="Beausoleil S.A."/>
            <person name="Villen J."/>
            <person name="Haas W."/>
            <person name="Sowa M.E."/>
            <person name="Gygi S.P."/>
        </authorList>
    </citation>
    <scope>IDENTIFICATION BY MASS SPECTROMETRY [LARGE SCALE ANALYSIS]</scope>
    <source>
        <tissue>Pancreas</tissue>
        <tissue>Spleen</tissue>
    </source>
</reference>
<accession>Q3UZW7</accession>
<accession>Q3TQL2</accession>
<accession>Q80XE2</accession>
<accession>Q9CS89</accession>